<reference key="1">
    <citation type="journal article" date="2004" name="Nat. Genet.">
        <title>Complete sequencing and characterization of 21,243 full-length human cDNAs.</title>
        <authorList>
            <person name="Ota T."/>
            <person name="Suzuki Y."/>
            <person name="Nishikawa T."/>
            <person name="Otsuki T."/>
            <person name="Sugiyama T."/>
            <person name="Irie R."/>
            <person name="Wakamatsu A."/>
            <person name="Hayashi K."/>
            <person name="Sato H."/>
            <person name="Nagai K."/>
            <person name="Kimura K."/>
            <person name="Makita H."/>
            <person name="Sekine M."/>
            <person name="Obayashi M."/>
            <person name="Nishi T."/>
            <person name="Shibahara T."/>
            <person name="Tanaka T."/>
            <person name="Ishii S."/>
            <person name="Yamamoto J."/>
            <person name="Saito K."/>
            <person name="Kawai Y."/>
            <person name="Isono Y."/>
            <person name="Nakamura Y."/>
            <person name="Nagahari K."/>
            <person name="Murakami K."/>
            <person name="Yasuda T."/>
            <person name="Iwayanagi T."/>
            <person name="Wagatsuma M."/>
            <person name="Shiratori A."/>
            <person name="Sudo H."/>
            <person name="Hosoiri T."/>
            <person name="Kaku Y."/>
            <person name="Kodaira H."/>
            <person name="Kondo H."/>
            <person name="Sugawara M."/>
            <person name="Takahashi M."/>
            <person name="Kanda K."/>
            <person name="Yokoi T."/>
            <person name="Furuya T."/>
            <person name="Kikkawa E."/>
            <person name="Omura Y."/>
            <person name="Abe K."/>
            <person name="Kamihara K."/>
            <person name="Katsuta N."/>
            <person name="Sato K."/>
            <person name="Tanikawa M."/>
            <person name="Yamazaki M."/>
            <person name="Ninomiya K."/>
            <person name="Ishibashi T."/>
            <person name="Yamashita H."/>
            <person name="Murakawa K."/>
            <person name="Fujimori K."/>
            <person name="Tanai H."/>
            <person name="Kimata M."/>
            <person name="Watanabe M."/>
            <person name="Hiraoka S."/>
            <person name="Chiba Y."/>
            <person name="Ishida S."/>
            <person name="Ono Y."/>
            <person name="Takiguchi S."/>
            <person name="Watanabe S."/>
            <person name="Yosida M."/>
            <person name="Hotuta T."/>
            <person name="Kusano J."/>
            <person name="Kanehori K."/>
            <person name="Takahashi-Fujii A."/>
            <person name="Hara H."/>
            <person name="Tanase T.-O."/>
            <person name="Nomura Y."/>
            <person name="Togiya S."/>
            <person name="Komai F."/>
            <person name="Hara R."/>
            <person name="Takeuchi K."/>
            <person name="Arita M."/>
            <person name="Imose N."/>
            <person name="Musashino K."/>
            <person name="Yuuki H."/>
            <person name="Oshima A."/>
            <person name="Sasaki N."/>
            <person name="Aotsuka S."/>
            <person name="Yoshikawa Y."/>
            <person name="Matsunawa H."/>
            <person name="Ichihara T."/>
            <person name="Shiohata N."/>
            <person name="Sano S."/>
            <person name="Moriya S."/>
            <person name="Momiyama H."/>
            <person name="Satoh N."/>
            <person name="Takami S."/>
            <person name="Terashima Y."/>
            <person name="Suzuki O."/>
            <person name="Nakagawa S."/>
            <person name="Senoh A."/>
            <person name="Mizoguchi H."/>
            <person name="Goto Y."/>
            <person name="Shimizu F."/>
            <person name="Wakebe H."/>
            <person name="Hishigaki H."/>
            <person name="Watanabe T."/>
            <person name="Sugiyama A."/>
            <person name="Takemoto M."/>
            <person name="Kawakami B."/>
            <person name="Yamazaki M."/>
            <person name="Watanabe K."/>
            <person name="Kumagai A."/>
            <person name="Itakura S."/>
            <person name="Fukuzumi Y."/>
            <person name="Fujimori Y."/>
            <person name="Komiyama M."/>
            <person name="Tashiro H."/>
            <person name="Tanigami A."/>
            <person name="Fujiwara T."/>
            <person name="Ono T."/>
            <person name="Yamada K."/>
            <person name="Fujii Y."/>
            <person name="Ozaki K."/>
            <person name="Hirao M."/>
            <person name="Ohmori Y."/>
            <person name="Kawabata A."/>
            <person name="Hikiji T."/>
            <person name="Kobatake N."/>
            <person name="Inagaki H."/>
            <person name="Ikema Y."/>
            <person name="Okamoto S."/>
            <person name="Okitani R."/>
            <person name="Kawakami T."/>
            <person name="Noguchi S."/>
            <person name="Itoh T."/>
            <person name="Shigeta K."/>
            <person name="Senba T."/>
            <person name="Matsumura K."/>
            <person name="Nakajima Y."/>
            <person name="Mizuno T."/>
            <person name="Morinaga M."/>
            <person name="Sasaki M."/>
            <person name="Togashi T."/>
            <person name="Oyama M."/>
            <person name="Hata H."/>
            <person name="Watanabe M."/>
            <person name="Komatsu T."/>
            <person name="Mizushima-Sugano J."/>
            <person name="Satoh T."/>
            <person name="Shirai Y."/>
            <person name="Takahashi Y."/>
            <person name="Nakagawa K."/>
            <person name="Okumura K."/>
            <person name="Nagase T."/>
            <person name="Nomura N."/>
            <person name="Kikuchi H."/>
            <person name="Masuho Y."/>
            <person name="Yamashita R."/>
            <person name="Nakai K."/>
            <person name="Yada T."/>
            <person name="Nakamura Y."/>
            <person name="Ohara O."/>
            <person name="Isogai T."/>
            <person name="Sugano S."/>
        </authorList>
    </citation>
    <scope>NUCLEOTIDE SEQUENCE [LARGE SCALE MRNA]</scope>
    <source>
        <tissue>Cerebellum</tissue>
    </source>
</reference>
<reference key="2">
    <citation type="journal article" date="2005" name="Nature">
        <title>The DNA sequence of the human X chromosome.</title>
        <authorList>
            <person name="Ross M.T."/>
            <person name="Grafham D.V."/>
            <person name="Coffey A.J."/>
            <person name="Scherer S."/>
            <person name="McLay K."/>
            <person name="Muzny D."/>
            <person name="Platzer M."/>
            <person name="Howell G.R."/>
            <person name="Burrows C."/>
            <person name="Bird C.P."/>
            <person name="Frankish A."/>
            <person name="Lovell F.L."/>
            <person name="Howe K.L."/>
            <person name="Ashurst J.L."/>
            <person name="Fulton R.S."/>
            <person name="Sudbrak R."/>
            <person name="Wen G."/>
            <person name="Jones M.C."/>
            <person name="Hurles M.E."/>
            <person name="Andrews T.D."/>
            <person name="Scott C.E."/>
            <person name="Searle S."/>
            <person name="Ramser J."/>
            <person name="Whittaker A."/>
            <person name="Deadman R."/>
            <person name="Carter N.P."/>
            <person name="Hunt S.E."/>
            <person name="Chen R."/>
            <person name="Cree A."/>
            <person name="Gunaratne P."/>
            <person name="Havlak P."/>
            <person name="Hodgson A."/>
            <person name="Metzker M.L."/>
            <person name="Richards S."/>
            <person name="Scott G."/>
            <person name="Steffen D."/>
            <person name="Sodergren E."/>
            <person name="Wheeler D.A."/>
            <person name="Worley K.C."/>
            <person name="Ainscough R."/>
            <person name="Ambrose K.D."/>
            <person name="Ansari-Lari M.A."/>
            <person name="Aradhya S."/>
            <person name="Ashwell R.I."/>
            <person name="Babbage A.K."/>
            <person name="Bagguley C.L."/>
            <person name="Ballabio A."/>
            <person name="Banerjee R."/>
            <person name="Barker G.E."/>
            <person name="Barlow K.F."/>
            <person name="Barrett I.P."/>
            <person name="Bates K.N."/>
            <person name="Beare D.M."/>
            <person name="Beasley H."/>
            <person name="Beasley O."/>
            <person name="Beck A."/>
            <person name="Bethel G."/>
            <person name="Blechschmidt K."/>
            <person name="Brady N."/>
            <person name="Bray-Allen S."/>
            <person name="Bridgeman A.M."/>
            <person name="Brown A.J."/>
            <person name="Brown M.J."/>
            <person name="Bonnin D."/>
            <person name="Bruford E.A."/>
            <person name="Buhay C."/>
            <person name="Burch P."/>
            <person name="Burford D."/>
            <person name="Burgess J."/>
            <person name="Burrill W."/>
            <person name="Burton J."/>
            <person name="Bye J.M."/>
            <person name="Carder C."/>
            <person name="Carrel L."/>
            <person name="Chako J."/>
            <person name="Chapman J.C."/>
            <person name="Chavez D."/>
            <person name="Chen E."/>
            <person name="Chen G."/>
            <person name="Chen Y."/>
            <person name="Chen Z."/>
            <person name="Chinault C."/>
            <person name="Ciccodicola A."/>
            <person name="Clark S.Y."/>
            <person name="Clarke G."/>
            <person name="Clee C.M."/>
            <person name="Clegg S."/>
            <person name="Clerc-Blankenburg K."/>
            <person name="Clifford K."/>
            <person name="Cobley V."/>
            <person name="Cole C.G."/>
            <person name="Conquer J.S."/>
            <person name="Corby N."/>
            <person name="Connor R.E."/>
            <person name="David R."/>
            <person name="Davies J."/>
            <person name="Davis C."/>
            <person name="Davis J."/>
            <person name="Delgado O."/>
            <person name="Deshazo D."/>
            <person name="Dhami P."/>
            <person name="Ding Y."/>
            <person name="Dinh H."/>
            <person name="Dodsworth S."/>
            <person name="Draper H."/>
            <person name="Dugan-Rocha S."/>
            <person name="Dunham A."/>
            <person name="Dunn M."/>
            <person name="Durbin K.J."/>
            <person name="Dutta I."/>
            <person name="Eades T."/>
            <person name="Ellwood M."/>
            <person name="Emery-Cohen A."/>
            <person name="Errington H."/>
            <person name="Evans K.L."/>
            <person name="Faulkner L."/>
            <person name="Francis F."/>
            <person name="Frankland J."/>
            <person name="Fraser A.E."/>
            <person name="Galgoczy P."/>
            <person name="Gilbert J."/>
            <person name="Gill R."/>
            <person name="Gloeckner G."/>
            <person name="Gregory S.G."/>
            <person name="Gribble S."/>
            <person name="Griffiths C."/>
            <person name="Grocock R."/>
            <person name="Gu Y."/>
            <person name="Gwilliam R."/>
            <person name="Hamilton C."/>
            <person name="Hart E.A."/>
            <person name="Hawes A."/>
            <person name="Heath P.D."/>
            <person name="Heitmann K."/>
            <person name="Hennig S."/>
            <person name="Hernandez J."/>
            <person name="Hinzmann B."/>
            <person name="Ho S."/>
            <person name="Hoffs M."/>
            <person name="Howden P.J."/>
            <person name="Huckle E.J."/>
            <person name="Hume J."/>
            <person name="Hunt P.J."/>
            <person name="Hunt A.R."/>
            <person name="Isherwood J."/>
            <person name="Jacob L."/>
            <person name="Johnson D."/>
            <person name="Jones S."/>
            <person name="de Jong P.J."/>
            <person name="Joseph S.S."/>
            <person name="Keenan S."/>
            <person name="Kelly S."/>
            <person name="Kershaw J.K."/>
            <person name="Khan Z."/>
            <person name="Kioschis P."/>
            <person name="Klages S."/>
            <person name="Knights A.J."/>
            <person name="Kosiura A."/>
            <person name="Kovar-Smith C."/>
            <person name="Laird G.K."/>
            <person name="Langford C."/>
            <person name="Lawlor S."/>
            <person name="Leversha M."/>
            <person name="Lewis L."/>
            <person name="Liu W."/>
            <person name="Lloyd C."/>
            <person name="Lloyd D.M."/>
            <person name="Loulseged H."/>
            <person name="Loveland J.E."/>
            <person name="Lovell J.D."/>
            <person name="Lozado R."/>
            <person name="Lu J."/>
            <person name="Lyne R."/>
            <person name="Ma J."/>
            <person name="Maheshwari M."/>
            <person name="Matthews L.H."/>
            <person name="McDowall J."/>
            <person name="McLaren S."/>
            <person name="McMurray A."/>
            <person name="Meidl P."/>
            <person name="Meitinger T."/>
            <person name="Milne S."/>
            <person name="Miner G."/>
            <person name="Mistry S.L."/>
            <person name="Morgan M."/>
            <person name="Morris S."/>
            <person name="Mueller I."/>
            <person name="Mullikin J.C."/>
            <person name="Nguyen N."/>
            <person name="Nordsiek G."/>
            <person name="Nyakatura G."/>
            <person name="O'dell C.N."/>
            <person name="Okwuonu G."/>
            <person name="Palmer S."/>
            <person name="Pandian R."/>
            <person name="Parker D."/>
            <person name="Parrish J."/>
            <person name="Pasternak S."/>
            <person name="Patel D."/>
            <person name="Pearce A.V."/>
            <person name="Pearson D.M."/>
            <person name="Pelan S.E."/>
            <person name="Perez L."/>
            <person name="Porter K.M."/>
            <person name="Ramsey Y."/>
            <person name="Reichwald K."/>
            <person name="Rhodes S."/>
            <person name="Ridler K.A."/>
            <person name="Schlessinger D."/>
            <person name="Schueler M.G."/>
            <person name="Sehra H.K."/>
            <person name="Shaw-Smith C."/>
            <person name="Shen H."/>
            <person name="Sheridan E.M."/>
            <person name="Shownkeen R."/>
            <person name="Skuce C.D."/>
            <person name="Smith M.L."/>
            <person name="Sotheran E.C."/>
            <person name="Steingruber H.E."/>
            <person name="Steward C.A."/>
            <person name="Storey R."/>
            <person name="Swann R.M."/>
            <person name="Swarbreck D."/>
            <person name="Tabor P.E."/>
            <person name="Taudien S."/>
            <person name="Taylor T."/>
            <person name="Teague B."/>
            <person name="Thomas K."/>
            <person name="Thorpe A."/>
            <person name="Timms K."/>
            <person name="Tracey A."/>
            <person name="Trevanion S."/>
            <person name="Tromans A.C."/>
            <person name="d'Urso M."/>
            <person name="Verduzco D."/>
            <person name="Villasana D."/>
            <person name="Waldron L."/>
            <person name="Wall M."/>
            <person name="Wang Q."/>
            <person name="Warren J."/>
            <person name="Warry G.L."/>
            <person name="Wei X."/>
            <person name="West A."/>
            <person name="Whitehead S.L."/>
            <person name="Whiteley M.N."/>
            <person name="Wilkinson J.E."/>
            <person name="Willey D.L."/>
            <person name="Williams G."/>
            <person name="Williams L."/>
            <person name="Williamson A."/>
            <person name="Williamson H."/>
            <person name="Wilming L."/>
            <person name="Woodmansey R.L."/>
            <person name="Wray P.W."/>
            <person name="Yen J."/>
            <person name="Zhang J."/>
            <person name="Zhou J."/>
            <person name="Zoghbi H."/>
            <person name="Zorilla S."/>
            <person name="Buck D."/>
            <person name="Reinhardt R."/>
            <person name="Poustka A."/>
            <person name="Rosenthal A."/>
            <person name="Lehrach H."/>
            <person name="Meindl A."/>
            <person name="Minx P.J."/>
            <person name="Hillier L.W."/>
            <person name="Willard H.F."/>
            <person name="Wilson R.K."/>
            <person name="Waterston R.H."/>
            <person name="Rice C.M."/>
            <person name="Vaudin M."/>
            <person name="Coulson A."/>
            <person name="Nelson D.L."/>
            <person name="Weinstock G."/>
            <person name="Sulston J.E."/>
            <person name="Durbin R.M."/>
            <person name="Hubbard T."/>
            <person name="Gibbs R.A."/>
            <person name="Beck S."/>
            <person name="Rogers J."/>
            <person name="Bentley D.R."/>
        </authorList>
    </citation>
    <scope>NUCLEOTIDE SEQUENCE [LARGE SCALE GENOMIC DNA]</scope>
</reference>
<reference key="3">
    <citation type="submission" date="2005-09" db="EMBL/GenBank/DDBJ databases">
        <authorList>
            <person name="Mural R.J."/>
            <person name="Istrail S."/>
            <person name="Sutton G.G."/>
            <person name="Florea L."/>
            <person name="Halpern A.L."/>
            <person name="Mobarry C.M."/>
            <person name="Lippert R."/>
            <person name="Walenz B."/>
            <person name="Shatkay H."/>
            <person name="Dew I."/>
            <person name="Miller J.R."/>
            <person name="Flanigan M.J."/>
            <person name="Edwards N.J."/>
            <person name="Bolanos R."/>
            <person name="Fasulo D."/>
            <person name="Halldorsson B.V."/>
            <person name="Hannenhalli S."/>
            <person name="Turner R."/>
            <person name="Yooseph S."/>
            <person name="Lu F."/>
            <person name="Nusskern D.R."/>
            <person name="Shue B.C."/>
            <person name="Zheng X.H."/>
            <person name="Zhong F."/>
            <person name="Delcher A.L."/>
            <person name="Huson D.H."/>
            <person name="Kravitz S.A."/>
            <person name="Mouchard L."/>
            <person name="Reinert K."/>
            <person name="Remington K.A."/>
            <person name="Clark A.G."/>
            <person name="Waterman M.S."/>
            <person name="Eichler E.E."/>
            <person name="Adams M.D."/>
            <person name="Hunkapiller M.W."/>
            <person name="Myers E.W."/>
            <person name="Venter J.C."/>
        </authorList>
    </citation>
    <scope>NUCLEOTIDE SEQUENCE [LARGE SCALE GENOMIC DNA]</scope>
</reference>
<reference key="4">
    <citation type="journal article" date="2004" name="Genome Res.">
        <title>The status, quality, and expansion of the NIH full-length cDNA project: the Mammalian Gene Collection (MGC).</title>
        <authorList>
            <consortium name="The MGC Project Team"/>
        </authorList>
    </citation>
    <scope>NUCLEOTIDE SEQUENCE [LARGE SCALE MRNA]</scope>
    <source>
        <tissue>Brain</tissue>
    </source>
</reference>
<reference key="5">
    <citation type="journal article" date="2008" name="Oncogene">
        <title>A role for candidate tumor-suppressor gene TCEAL7 in the regulation of c-Myc activity, cyclin D1 levels and cellular transformation.</title>
        <authorList>
            <person name="Chien J."/>
            <person name="Narita K."/>
            <person name="Rattan R."/>
            <person name="Giri S."/>
            <person name="Shridhar R."/>
            <person name="Staub J."/>
            <person name="Beleford D."/>
            <person name="Lai J."/>
            <person name="Roberts L.R."/>
            <person name="Molina J."/>
            <person name="Kaufmann S.H."/>
            <person name="Prendergast G.C."/>
            <person name="Shridhar V."/>
        </authorList>
    </citation>
    <scope>FUNCTION</scope>
    <scope>SUBCELLULAR LOCATION</scope>
    <scope>TISSUE SPECIFICITY</scope>
</reference>
<reference key="6">
    <citation type="journal article" date="2010" name="Neoplasia">
        <title>TCEAL7 inhibition of c-Myc activity in alternative lengthening of telomeres regulates hTERT expression.</title>
        <authorList>
            <person name="Lafferty-Whyte K."/>
            <person name="Bilsland A."/>
            <person name="Hoare S.F."/>
            <person name="Burns S."/>
            <person name="Zaffaroni N."/>
            <person name="Cairney C.J."/>
            <person name="Keith W.N."/>
        </authorList>
    </citation>
    <scope>FUNCTION</scope>
</reference>
<reference key="7">
    <citation type="journal article" date="2010" name="Oncogene">
        <title>TCEAL7, a putative tumor suppressor gene, negatively regulates NF-kappaB pathway.</title>
        <authorList>
            <person name="Rattan R."/>
            <person name="Narita K."/>
            <person name="Chien J."/>
            <person name="Maguire J.L."/>
            <person name="Shridhar R."/>
            <person name="Giri S."/>
            <person name="Shridhar V."/>
        </authorList>
    </citation>
    <scope>FUNCTION</scope>
</reference>
<sequence>MQKPCKENEGKPKCSVPKREEKRPYGEFERQQTEGNFRQRLLQSLEEFKEDIDYRHFKDEEMTREGDEMERCLEEIRGLRKKFRALHSNHRHSRDRPYPI</sequence>
<feature type="chain" id="PRO_0000239214" description="Transcription elongation factor A protein-like 7">
    <location>
        <begin position="1"/>
        <end position="100"/>
    </location>
</feature>
<feature type="region of interest" description="Disordered" evidence="2">
    <location>
        <begin position="1"/>
        <end position="34"/>
    </location>
</feature>
<feature type="coiled-coil region" evidence="1">
    <location>
        <begin position="60"/>
        <end position="88"/>
    </location>
</feature>
<feature type="compositionally biased region" description="Basic and acidic residues" evidence="2">
    <location>
        <begin position="1"/>
        <end position="32"/>
    </location>
</feature>
<accession>Q9BRU2</accession>
<accession>B3KSV2</accession>
<accession>Q96AT4</accession>
<gene>
    <name type="primary">TCEAL7</name>
</gene>
<proteinExistence type="evidence at protein level"/>
<evidence type="ECO:0000255" key="1"/>
<evidence type="ECO:0000256" key="2">
    <source>
        <dbReference type="SAM" id="MobiDB-lite"/>
    </source>
</evidence>
<evidence type="ECO:0000269" key="3">
    <source>
    </source>
</evidence>
<evidence type="ECO:0000269" key="4">
    <source>
    </source>
</evidence>
<evidence type="ECO:0000269" key="5">
    <source>
    </source>
</evidence>
<evidence type="ECO:0000305" key="6"/>
<dbReference type="EMBL" id="AK094400">
    <property type="protein sequence ID" value="BAG52864.1"/>
    <property type="molecule type" value="mRNA"/>
</dbReference>
<dbReference type="EMBL" id="Z92846">
    <property type="status" value="NOT_ANNOTATED_CDS"/>
    <property type="molecule type" value="Genomic_DNA"/>
</dbReference>
<dbReference type="EMBL" id="CH471190">
    <property type="protein sequence ID" value="EAW54714.1"/>
    <property type="molecule type" value="Genomic_DNA"/>
</dbReference>
<dbReference type="EMBL" id="BC005988">
    <property type="protein sequence ID" value="AAH05988.2"/>
    <property type="molecule type" value="mRNA"/>
</dbReference>
<dbReference type="EMBL" id="BC016786">
    <property type="protein sequence ID" value="AAH16786.1"/>
    <property type="molecule type" value="mRNA"/>
</dbReference>
<dbReference type="CCDS" id="CCDS14506.1"/>
<dbReference type="RefSeq" id="NP_001335187.1">
    <property type="nucleotide sequence ID" value="NM_001348258.2"/>
</dbReference>
<dbReference type="RefSeq" id="NP_689491.1">
    <property type="nucleotide sequence ID" value="NM_152278.5"/>
</dbReference>
<dbReference type="SMR" id="Q9BRU2"/>
<dbReference type="BioGRID" id="121209">
    <property type="interactions" value="108"/>
</dbReference>
<dbReference type="FunCoup" id="Q9BRU2">
    <property type="interactions" value="80"/>
</dbReference>
<dbReference type="IntAct" id="Q9BRU2">
    <property type="interactions" value="22"/>
</dbReference>
<dbReference type="MINT" id="Q9BRU2"/>
<dbReference type="STRING" id="9606.ENSP00000329794"/>
<dbReference type="BioMuta" id="TCEAL7"/>
<dbReference type="DMDM" id="74761221"/>
<dbReference type="MassIVE" id="Q9BRU2"/>
<dbReference type="PaxDb" id="9606-ENSP00000329794"/>
<dbReference type="PeptideAtlas" id="Q9BRU2"/>
<dbReference type="ProteomicsDB" id="78837"/>
<dbReference type="Pumba" id="Q9BRU2"/>
<dbReference type="Antibodypedia" id="44282">
    <property type="antibodies" value="73 antibodies from 20 providers"/>
</dbReference>
<dbReference type="DNASU" id="56849"/>
<dbReference type="Ensembl" id="ENST00000332431.5">
    <property type="protein sequence ID" value="ENSP00000329794.4"/>
    <property type="gene ID" value="ENSG00000182916.8"/>
</dbReference>
<dbReference type="Ensembl" id="ENST00000372666.1">
    <property type="protein sequence ID" value="ENSP00000361751.1"/>
    <property type="gene ID" value="ENSG00000182916.8"/>
</dbReference>
<dbReference type="GeneID" id="56849"/>
<dbReference type="KEGG" id="hsa:56849"/>
<dbReference type="MANE-Select" id="ENST00000332431.5">
    <property type="protein sequence ID" value="ENSP00000329794.4"/>
    <property type="RefSeq nucleotide sequence ID" value="NM_152278.5"/>
    <property type="RefSeq protein sequence ID" value="NP_689491.1"/>
</dbReference>
<dbReference type="UCSC" id="uc004ekc.3">
    <property type="organism name" value="human"/>
</dbReference>
<dbReference type="AGR" id="HGNC:28336"/>
<dbReference type="CTD" id="56849"/>
<dbReference type="DisGeNET" id="56849"/>
<dbReference type="GeneCards" id="TCEAL7"/>
<dbReference type="HGNC" id="HGNC:28336">
    <property type="gene designation" value="TCEAL7"/>
</dbReference>
<dbReference type="HPA" id="ENSG00000182916">
    <property type="expression patterns" value="Tissue enhanced (brain)"/>
</dbReference>
<dbReference type="MIM" id="300771">
    <property type="type" value="gene"/>
</dbReference>
<dbReference type="neXtProt" id="NX_Q9BRU2"/>
<dbReference type="OpenTargets" id="ENSG00000182916"/>
<dbReference type="PharmGKB" id="PA134936264"/>
<dbReference type="VEuPathDB" id="HostDB:ENSG00000182916"/>
<dbReference type="eggNOG" id="ENOG502TCAG">
    <property type="taxonomic scope" value="Eukaryota"/>
</dbReference>
<dbReference type="GeneTree" id="ENSGT00950000183164"/>
<dbReference type="HOGENOM" id="CLU_181913_0_0_1"/>
<dbReference type="InParanoid" id="Q9BRU2"/>
<dbReference type="OMA" id="DYRHFKG"/>
<dbReference type="OrthoDB" id="9510281at2759"/>
<dbReference type="PAN-GO" id="Q9BRU2">
    <property type="GO annotations" value="2 GO annotations based on evolutionary models"/>
</dbReference>
<dbReference type="PhylomeDB" id="Q9BRU2"/>
<dbReference type="PathwayCommons" id="Q9BRU2"/>
<dbReference type="SignaLink" id="Q9BRU2"/>
<dbReference type="BioGRID-ORCS" id="56849">
    <property type="hits" value="112 hits in 758 CRISPR screens"/>
</dbReference>
<dbReference type="GenomeRNAi" id="56849"/>
<dbReference type="Pharos" id="Q9BRU2">
    <property type="development level" value="Tbio"/>
</dbReference>
<dbReference type="PRO" id="PR:Q9BRU2"/>
<dbReference type="Proteomes" id="UP000005640">
    <property type="component" value="Chromosome X"/>
</dbReference>
<dbReference type="RNAct" id="Q9BRU2">
    <property type="molecule type" value="protein"/>
</dbReference>
<dbReference type="Bgee" id="ENSG00000182916">
    <property type="expression patterns" value="Expressed in Brodmann (1909) area 46 and 155 other cell types or tissues"/>
</dbReference>
<dbReference type="GO" id="GO:0005654">
    <property type="term" value="C:nucleoplasm"/>
    <property type="evidence" value="ECO:0000314"/>
    <property type="project" value="HPA"/>
</dbReference>
<dbReference type="GO" id="GO:0005634">
    <property type="term" value="C:nucleus"/>
    <property type="evidence" value="ECO:0000314"/>
    <property type="project" value="UniProtKB"/>
</dbReference>
<dbReference type="GO" id="GO:0045892">
    <property type="term" value="P:negative regulation of DNA-templated transcription"/>
    <property type="evidence" value="ECO:0000314"/>
    <property type="project" value="UniProtKB"/>
</dbReference>
<dbReference type="GO" id="GO:0032088">
    <property type="term" value="P:negative regulation of NF-kappaB transcription factor activity"/>
    <property type="evidence" value="ECO:0000314"/>
    <property type="project" value="UniProtKB"/>
</dbReference>
<dbReference type="InterPro" id="IPR021156">
    <property type="entry name" value="TF_A-like/BEX"/>
</dbReference>
<dbReference type="Pfam" id="PF04538">
    <property type="entry name" value="BEX"/>
    <property type="match status" value="1"/>
</dbReference>
<name>TCAL7_HUMAN</name>
<organism>
    <name type="scientific">Homo sapiens</name>
    <name type="common">Human</name>
    <dbReference type="NCBI Taxonomy" id="9606"/>
    <lineage>
        <taxon>Eukaryota</taxon>
        <taxon>Metazoa</taxon>
        <taxon>Chordata</taxon>
        <taxon>Craniata</taxon>
        <taxon>Vertebrata</taxon>
        <taxon>Euteleostomi</taxon>
        <taxon>Mammalia</taxon>
        <taxon>Eutheria</taxon>
        <taxon>Euarchontoglires</taxon>
        <taxon>Primates</taxon>
        <taxon>Haplorrhini</taxon>
        <taxon>Catarrhini</taxon>
        <taxon>Hominidae</taxon>
        <taxon>Homo</taxon>
    </lineage>
</organism>
<keyword id="KW-0175">Coiled coil</keyword>
<keyword id="KW-0539">Nucleus</keyword>
<keyword id="KW-1267">Proteomics identification</keyword>
<keyword id="KW-1185">Reference proteome</keyword>
<keyword id="KW-0678">Repressor</keyword>
<keyword id="KW-0804">Transcription</keyword>
<keyword id="KW-0805">Transcription regulation</keyword>
<protein>
    <recommendedName>
        <fullName>Transcription elongation factor A protein-like 7</fullName>
        <shortName>TCEA-like protein 7</shortName>
    </recommendedName>
    <alternativeName>
        <fullName>Transcription elongation factor S-II protein-like 7</fullName>
    </alternativeName>
</protein>
<comment type="function">
    <text evidence="3 4 5">Plays a role in the negative regulation of NF-kappa-B signaling at the basal level by modulating transcriptional activity of NF-kappa-B on its target gene promoters. Associates with cyclin D1 promoter containing Myc E-box sequence and transcriptionally represses cyclin D1 expression. Regulates telomerase reverse transcriptase expression and telomerase activity in both ALT (alternative lengthening of telomeres)and telomerase-positive cell lines.</text>
</comment>
<comment type="subcellular location">
    <subcellularLocation>
        <location evidence="3">Nucleus</location>
    </subcellularLocation>
</comment>
<comment type="tissue specificity">
    <text evidence="3">Highly expressed in normal and fetal brain tissues, and weakly expressed in uterus and ovary. Down-regulated in epithelial ovarian, cervical, prostate, breast, brain and lung cancer cell lines and in brain and ovarian tumors.</text>
</comment>
<comment type="similarity">
    <text evidence="6">Belongs to the TFS-II family. TFA subfamily.</text>
</comment>